<protein>
    <recommendedName>
        <fullName evidence="1">3-dehydroquinate synthase</fullName>
        <shortName evidence="1">DHQS</shortName>
        <ecNumber evidence="1">4.2.3.4</ecNumber>
    </recommendedName>
</protein>
<feature type="chain" id="PRO_1000094463" description="3-dehydroquinate synthase">
    <location>
        <begin position="1"/>
        <end position="382"/>
    </location>
</feature>
<feature type="binding site" evidence="1">
    <location>
        <begin position="81"/>
        <end position="86"/>
    </location>
    <ligand>
        <name>NAD(+)</name>
        <dbReference type="ChEBI" id="CHEBI:57540"/>
    </ligand>
</feature>
<feature type="binding site" evidence="1">
    <location>
        <begin position="115"/>
        <end position="119"/>
    </location>
    <ligand>
        <name>NAD(+)</name>
        <dbReference type="ChEBI" id="CHEBI:57540"/>
    </ligand>
</feature>
<feature type="binding site" evidence="1">
    <location>
        <begin position="139"/>
        <end position="140"/>
    </location>
    <ligand>
        <name>NAD(+)</name>
        <dbReference type="ChEBI" id="CHEBI:57540"/>
    </ligand>
</feature>
<feature type="binding site" evidence="1">
    <location>
        <position position="152"/>
    </location>
    <ligand>
        <name>NAD(+)</name>
        <dbReference type="ChEBI" id="CHEBI:57540"/>
    </ligand>
</feature>
<feature type="binding site" evidence="1">
    <location>
        <position position="161"/>
    </location>
    <ligand>
        <name>NAD(+)</name>
        <dbReference type="ChEBI" id="CHEBI:57540"/>
    </ligand>
</feature>
<feature type="binding site" evidence="1">
    <location>
        <position position="194"/>
    </location>
    <ligand>
        <name>Zn(2+)</name>
        <dbReference type="ChEBI" id="CHEBI:29105"/>
    </ligand>
</feature>
<feature type="binding site" evidence="1">
    <location>
        <position position="256"/>
    </location>
    <ligand>
        <name>Zn(2+)</name>
        <dbReference type="ChEBI" id="CHEBI:29105"/>
    </ligand>
</feature>
<feature type="binding site" evidence="1">
    <location>
        <position position="274"/>
    </location>
    <ligand>
        <name>Zn(2+)</name>
        <dbReference type="ChEBI" id="CHEBI:29105"/>
    </ligand>
</feature>
<organism>
    <name type="scientific">Bradyrhizobium sp. (strain BTAi1 / ATCC BAA-1182)</name>
    <dbReference type="NCBI Taxonomy" id="288000"/>
    <lineage>
        <taxon>Bacteria</taxon>
        <taxon>Pseudomonadati</taxon>
        <taxon>Pseudomonadota</taxon>
        <taxon>Alphaproteobacteria</taxon>
        <taxon>Hyphomicrobiales</taxon>
        <taxon>Nitrobacteraceae</taxon>
        <taxon>Bradyrhizobium</taxon>
    </lineage>
</organism>
<reference key="1">
    <citation type="journal article" date="2007" name="Science">
        <title>Legumes symbioses: absence of nod genes in photosynthetic bradyrhizobia.</title>
        <authorList>
            <person name="Giraud E."/>
            <person name="Moulin L."/>
            <person name="Vallenet D."/>
            <person name="Barbe V."/>
            <person name="Cytryn E."/>
            <person name="Avarre J.-C."/>
            <person name="Jaubert M."/>
            <person name="Simon D."/>
            <person name="Cartieaux F."/>
            <person name="Prin Y."/>
            <person name="Bena G."/>
            <person name="Hannibal L."/>
            <person name="Fardoux J."/>
            <person name="Kojadinovic M."/>
            <person name="Vuillet L."/>
            <person name="Lajus A."/>
            <person name="Cruveiller S."/>
            <person name="Rouy Z."/>
            <person name="Mangenot S."/>
            <person name="Segurens B."/>
            <person name="Dossat C."/>
            <person name="Franck W.L."/>
            <person name="Chang W.-S."/>
            <person name="Saunders E."/>
            <person name="Bruce D."/>
            <person name="Richardson P."/>
            <person name="Normand P."/>
            <person name="Dreyfus B."/>
            <person name="Pignol D."/>
            <person name="Stacey G."/>
            <person name="Emerich D."/>
            <person name="Vermeglio A."/>
            <person name="Medigue C."/>
            <person name="Sadowsky M."/>
        </authorList>
    </citation>
    <scope>NUCLEOTIDE SEQUENCE [LARGE SCALE GENOMIC DNA]</scope>
    <source>
        <strain>BTAi1 / ATCC BAA-1182</strain>
    </source>
</reference>
<comment type="function">
    <text evidence="1">Catalyzes the conversion of 3-deoxy-D-arabino-heptulosonate 7-phosphate (DAHP) to dehydroquinate (DHQ).</text>
</comment>
<comment type="catalytic activity">
    <reaction evidence="1">
        <text>7-phospho-2-dehydro-3-deoxy-D-arabino-heptonate = 3-dehydroquinate + phosphate</text>
        <dbReference type="Rhea" id="RHEA:21968"/>
        <dbReference type="ChEBI" id="CHEBI:32364"/>
        <dbReference type="ChEBI" id="CHEBI:43474"/>
        <dbReference type="ChEBI" id="CHEBI:58394"/>
        <dbReference type="EC" id="4.2.3.4"/>
    </reaction>
</comment>
<comment type="cofactor">
    <cofactor evidence="1">
        <name>Co(2+)</name>
        <dbReference type="ChEBI" id="CHEBI:48828"/>
    </cofactor>
    <cofactor evidence="1">
        <name>Zn(2+)</name>
        <dbReference type="ChEBI" id="CHEBI:29105"/>
    </cofactor>
    <text evidence="1">Binds 1 divalent metal cation per subunit. Can use either Co(2+) or Zn(2+).</text>
</comment>
<comment type="cofactor">
    <cofactor evidence="1">
        <name>NAD(+)</name>
        <dbReference type="ChEBI" id="CHEBI:57540"/>
    </cofactor>
</comment>
<comment type="pathway">
    <text evidence="1">Metabolic intermediate biosynthesis; chorismate biosynthesis; chorismate from D-erythrose 4-phosphate and phosphoenolpyruvate: step 2/7.</text>
</comment>
<comment type="subcellular location">
    <subcellularLocation>
        <location evidence="1">Cytoplasm</location>
    </subcellularLocation>
</comment>
<comment type="similarity">
    <text evidence="1">Belongs to the sugar phosphate cyclases superfamily. Dehydroquinate synthase family.</text>
</comment>
<gene>
    <name evidence="1" type="primary">aroB</name>
    <name type="ordered locus">BBta_7572</name>
</gene>
<dbReference type="EC" id="4.2.3.4" evidence="1"/>
<dbReference type="EMBL" id="CP000494">
    <property type="protein sequence ID" value="ABQ39419.1"/>
    <property type="molecule type" value="Genomic_DNA"/>
</dbReference>
<dbReference type="RefSeq" id="WP_012047310.1">
    <property type="nucleotide sequence ID" value="NC_009485.1"/>
</dbReference>
<dbReference type="SMR" id="A5ETC5"/>
<dbReference type="STRING" id="288000.BBta_7572"/>
<dbReference type="KEGG" id="bbt:BBta_7572"/>
<dbReference type="eggNOG" id="COG0337">
    <property type="taxonomic scope" value="Bacteria"/>
</dbReference>
<dbReference type="HOGENOM" id="CLU_001201_0_2_5"/>
<dbReference type="OrthoDB" id="9806583at2"/>
<dbReference type="UniPathway" id="UPA00053">
    <property type="reaction ID" value="UER00085"/>
</dbReference>
<dbReference type="Proteomes" id="UP000000246">
    <property type="component" value="Chromosome"/>
</dbReference>
<dbReference type="GO" id="GO:0005737">
    <property type="term" value="C:cytoplasm"/>
    <property type="evidence" value="ECO:0007669"/>
    <property type="project" value="UniProtKB-SubCell"/>
</dbReference>
<dbReference type="GO" id="GO:0003856">
    <property type="term" value="F:3-dehydroquinate synthase activity"/>
    <property type="evidence" value="ECO:0007669"/>
    <property type="project" value="UniProtKB-UniRule"/>
</dbReference>
<dbReference type="GO" id="GO:0046872">
    <property type="term" value="F:metal ion binding"/>
    <property type="evidence" value="ECO:0007669"/>
    <property type="project" value="UniProtKB-KW"/>
</dbReference>
<dbReference type="GO" id="GO:0000166">
    <property type="term" value="F:nucleotide binding"/>
    <property type="evidence" value="ECO:0007669"/>
    <property type="project" value="UniProtKB-KW"/>
</dbReference>
<dbReference type="GO" id="GO:0008652">
    <property type="term" value="P:amino acid biosynthetic process"/>
    <property type="evidence" value="ECO:0007669"/>
    <property type="project" value="UniProtKB-KW"/>
</dbReference>
<dbReference type="GO" id="GO:0009073">
    <property type="term" value="P:aromatic amino acid family biosynthetic process"/>
    <property type="evidence" value="ECO:0007669"/>
    <property type="project" value="UniProtKB-KW"/>
</dbReference>
<dbReference type="GO" id="GO:0009423">
    <property type="term" value="P:chorismate biosynthetic process"/>
    <property type="evidence" value="ECO:0007669"/>
    <property type="project" value="UniProtKB-UniRule"/>
</dbReference>
<dbReference type="CDD" id="cd08195">
    <property type="entry name" value="DHQS"/>
    <property type="match status" value="1"/>
</dbReference>
<dbReference type="FunFam" id="3.40.50.1970:FF:000001">
    <property type="entry name" value="3-dehydroquinate synthase"/>
    <property type="match status" value="1"/>
</dbReference>
<dbReference type="Gene3D" id="3.40.50.1970">
    <property type="match status" value="1"/>
</dbReference>
<dbReference type="Gene3D" id="1.20.1090.10">
    <property type="entry name" value="Dehydroquinate synthase-like - alpha domain"/>
    <property type="match status" value="1"/>
</dbReference>
<dbReference type="HAMAP" id="MF_00110">
    <property type="entry name" value="DHQ_synthase"/>
    <property type="match status" value="1"/>
</dbReference>
<dbReference type="InterPro" id="IPR050071">
    <property type="entry name" value="Dehydroquinate_synthase"/>
</dbReference>
<dbReference type="InterPro" id="IPR016037">
    <property type="entry name" value="DHQ_synth_AroB"/>
</dbReference>
<dbReference type="InterPro" id="IPR030963">
    <property type="entry name" value="DHQ_synth_fam"/>
</dbReference>
<dbReference type="InterPro" id="IPR030960">
    <property type="entry name" value="DHQS/DOIS_N"/>
</dbReference>
<dbReference type="InterPro" id="IPR056179">
    <property type="entry name" value="DHQS_C"/>
</dbReference>
<dbReference type="NCBIfam" id="TIGR01357">
    <property type="entry name" value="aroB"/>
    <property type="match status" value="1"/>
</dbReference>
<dbReference type="PANTHER" id="PTHR43622">
    <property type="entry name" value="3-DEHYDROQUINATE SYNTHASE"/>
    <property type="match status" value="1"/>
</dbReference>
<dbReference type="PANTHER" id="PTHR43622:SF7">
    <property type="entry name" value="3-DEHYDROQUINATE SYNTHASE, CHLOROPLASTIC"/>
    <property type="match status" value="1"/>
</dbReference>
<dbReference type="Pfam" id="PF01761">
    <property type="entry name" value="DHQ_synthase"/>
    <property type="match status" value="1"/>
</dbReference>
<dbReference type="Pfam" id="PF24621">
    <property type="entry name" value="DHQS_C"/>
    <property type="match status" value="1"/>
</dbReference>
<dbReference type="PIRSF" id="PIRSF001455">
    <property type="entry name" value="DHQ_synth"/>
    <property type="match status" value="1"/>
</dbReference>
<dbReference type="SUPFAM" id="SSF56796">
    <property type="entry name" value="Dehydroquinate synthase-like"/>
    <property type="match status" value="1"/>
</dbReference>
<proteinExistence type="inferred from homology"/>
<sequence>MTAPLKTFDPIIVDVALGERAYDIVIGRGVLASLGQRIAALRPGVRTAIVTDRTVAAHWLKPTEAILAEAGIPSSTIVVEEGEGSKTYAGLEKVSEALIAAKIERNDLVIALGGGVVGDLAGFAAAILRRGVNFVQVPTSLLAQVDSSVGGKTGINSPQGKNLLGAFHQPVLVIADTAVLDTLSPRQFRAGYAEVAKYGLLGDAGFFTWLEANHADIVTGGAAREHAVATSCRAKAAIVARDERETGDRALLNLGHTFGHALEAITGFSDRLFHGEGVAVGMVLAAQFSAELGMLPPDDVTRIERHLAAVGLPTHLQDIAGFAQEGIGDADRLLALMAQDKKVKRGKLTFILMEAIGRAVIAKDVDPARVRDFLQAKLHRRG</sequence>
<name>AROB_BRASB</name>
<evidence type="ECO:0000255" key="1">
    <source>
        <dbReference type="HAMAP-Rule" id="MF_00110"/>
    </source>
</evidence>
<keyword id="KW-0028">Amino-acid biosynthesis</keyword>
<keyword id="KW-0057">Aromatic amino acid biosynthesis</keyword>
<keyword id="KW-0170">Cobalt</keyword>
<keyword id="KW-0963">Cytoplasm</keyword>
<keyword id="KW-0456">Lyase</keyword>
<keyword id="KW-0479">Metal-binding</keyword>
<keyword id="KW-0520">NAD</keyword>
<keyword id="KW-0547">Nucleotide-binding</keyword>
<keyword id="KW-1185">Reference proteome</keyword>
<keyword id="KW-0862">Zinc</keyword>
<accession>A5ETC5</accession>